<reference key="1">
    <citation type="journal article" date="2014" name="Mol. Cell">
        <title>Programmable RNA shredding by the type III-A CRISPR-Cas system of Streptococcus thermophilus.</title>
        <authorList>
            <person name="Tamulaitis G."/>
            <person name="Kazlauskiene M."/>
            <person name="Manakova E."/>
            <person name="Venclovas C."/>
            <person name="Nwokeoji A.O."/>
            <person name="Dickman M.J."/>
            <person name="Horvath P."/>
            <person name="Siksnys V."/>
        </authorList>
    </citation>
    <scope>NUCLEOTIDE SEQUENCE [GENOMIC DNA]</scope>
    <scope>FUNCTION IN PHAGE RESISTANCE</scope>
    <scope>TARGETS SSRNA</scope>
    <source>
        <strain>DGCC8004</strain>
    </source>
</reference>
<reference key="2">
    <citation type="journal article" date="2016" name="Mol. Cell">
        <title>Spatiotemporal control of type III-A CRISPR-Cas immunity: coupling DNA degradation with the target RNA recognition.</title>
        <authorList>
            <person name="Kazlauskiene M."/>
            <person name="Tamulaitis G."/>
            <person name="Kostiuk G."/>
            <person name="Venclovas C."/>
            <person name="Siksnys V."/>
        </authorList>
    </citation>
    <scope>FUNCTION</scope>
    <source>
        <strain>DGCC8004</strain>
    </source>
</reference>
<reference key="3">
    <citation type="journal article" date="2017" name="Science">
        <title>A cyclic oligonucleotide signaling pathway in type III CRISPR-Cas systems.</title>
        <authorList>
            <person name="Kazlauskiene M."/>
            <person name="Kostiuk G."/>
            <person name="Venclovas C."/>
            <person name="Tamulaitis G."/>
            <person name="Siksnys V."/>
        </authorList>
    </citation>
    <scope>FUNCTION</scope>
    <scope>ACTIVITY REGULATION</scope>
    <scope>SUBUNIT</scope>
    <scope>MUTAGENESIS OF 331-ARG--HIS-336</scope>
    <source>
        <strain>DGCC8004</strain>
    </source>
</reference>
<protein>
    <recommendedName>
        <fullName evidence="5">CRISPR system endoribonuclease Csm6'</fullName>
        <ecNumber evidence="4">3.1.-.-</ecNumber>
    </recommendedName>
    <alternativeName>
        <fullName evidence="7">CRISPR type III-A associated protein Csm6-2</fullName>
    </alternativeName>
</protein>
<accession>A0A0A7HFE6</accession>
<evidence type="ECO:0000250" key="1">
    <source>
        <dbReference type="UniProtKB" id="Q53W17"/>
    </source>
</evidence>
<evidence type="ECO:0000269" key="2">
    <source>
    </source>
</evidence>
<evidence type="ECO:0000269" key="3">
    <source>
    </source>
</evidence>
<evidence type="ECO:0000269" key="4">
    <source>
    </source>
</evidence>
<evidence type="ECO:0000303" key="5">
    <source>
    </source>
</evidence>
<evidence type="ECO:0000303" key="6">
    <source>
    </source>
</evidence>
<evidence type="ECO:0000305" key="7"/>
<evidence type="ECO:0007829" key="8">
    <source>
        <dbReference type="PDB" id="8PE3"/>
    </source>
</evidence>
<dbReference type="EC" id="3.1.-.-" evidence="4"/>
<dbReference type="EMBL" id="KM222358">
    <property type="protein sequence ID" value="AIZ03609.1"/>
    <property type="molecule type" value="Genomic_DNA"/>
</dbReference>
<dbReference type="PDB" id="8PCW">
    <property type="method" value="X-ray"/>
    <property type="resolution" value="3.54 A"/>
    <property type="chains" value="A/B=3-386"/>
</dbReference>
<dbReference type="PDB" id="8PE3">
    <property type="method" value="X-ray"/>
    <property type="resolution" value="1.96 A"/>
    <property type="chains" value="A/B=3-386"/>
</dbReference>
<dbReference type="PDBsum" id="8PCW"/>
<dbReference type="PDBsum" id="8PE3"/>
<dbReference type="SMR" id="A0A0A7HFE6"/>
<dbReference type="GO" id="GO:0004519">
    <property type="term" value="F:endonuclease activity"/>
    <property type="evidence" value="ECO:0007669"/>
    <property type="project" value="UniProtKB-KW"/>
</dbReference>
<dbReference type="GO" id="GO:0000166">
    <property type="term" value="F:nucleotide binding"/>
    <property type="evidence" value="ECO:0007669"/>
    <property type="project" value="UniProtKB-KW"/>
</dbReference>
<dbReference type="GO" id="GO:0003723">
    <property type="term" value="F:RNA binding"/>
    <property type="evidence" value="ECO:0007669"/>
    <property type="project" value="UniProtKB-KW"/>
</dbReference>
<dbReference type="GO" id="GO:0051607">
    <property type="term" value="P:defense response to virus"/>
    <property type="evidence" value="ECO:0007669"/>
    <property type="project" value="UniProtKB-KW"/>
</dbReference>
<dbReference type="InterPro" id="IPR013489">
    <property type="entry name" value="CRISPR-assoc_prot_Csm6"/>
</dbReference>
<dbReference type="InterPro" id="IPR053955">
    <property type="entry name" value="Csm6_CARF"/>
</dbReference>
<dbReference type="InterPro" id="IPR053941">
    <property type="entry name" value="Csm6_HEPN"/>
</dbReference>
<dbReference type="NCBIfam" id="TIGR02672">
    <property type="entry name" value="cas_csm6"/>
    <property type="match status" value="1"/>
</dbReference>
<dbReference type="Pfam" id="PF22208">
    <property type="entry name" value="Cas_Csm6_CARF"/>
    <property type="match status" value="1"/>
</dbReference>
<dbReference type="Pfam" id="PF09659">
    <property type="entry name" value="Cas_Csm6_HEPN"/>
    <property type="match status" value="1"/>
</dbReference>
<feature type="chain" id="PRO_0000446127" description="CRISPR system endoribonuclease Csm6'">
    <location>
        <begin position="1"/>
        <end position="386"/>
    </location>
</feature>
<feature type="region of interest" description="CARF domain" evidence="6">
    <location>
        <begin position="1"/>
        <end position="146"/>
    </location>
</feature>
<feature type="region of interest" description="HEPN domain" evidence="6">
    <location>
        <begin position="147"/>
        <end position="386"/>
    </location>
</feature>
<feature type="mutagenesis site" description="No ssRNase activity even in presence of cOA." evidence="4">
    <original>RNKVAH</original>
    <variation>ANKVAA</variation>
    <location>
        <begin position="331"/>
        <end position="336"/>
    </location>
</feature>
<feature type="strand" evidence="8">
    <location>
        <begin position="3"/>
        <end position="7"/>
    </location>
</feature>
<feature type="strand" evidence="8">
    <location>
        <begin position="13"/>
        <end position="15"/>
    </location>
</feature>
<feature type="helix" evidence="8">
    <location>
        <begin position="21"/>
        <end position="29"/>
    </location>
</feature>
<feature type="strand" evidence="8">
    <location>
        <begin position="32"/>
        <end position="37"/>
    </location>
</feature>
<feature type="helix" evidence="8">
    <location>
        <begin position="40"/>
        <end position="43"/>
    </location>
</feature>
<feature type="helix" evidence="8">
    <location>
        <begin position="46"/>
        <end position="54"/>
    </location>
</feature>
<feature type="strand" evidence="8">
    <location>
        <begin position="63"/>
        <end position="66"/>
    </location>
</feature>
<feature type="turn" evidence="8">
    <location>
        <begin position="73"/>
        <end position="77"/>
    </location>
</feature>
<feature type="helix" evidence="8">
    <location>
        <begin position="79"/>
        <end position="93"/>
    </location>
</feature>
<feature type="strand" evidence="8">
    <location>
        <begin position="96"/>
        <end position="103"/>
    </location>
</feature>
<feature type="helix" evidence="8">
    <location>
        <begin position="109"/>
        <end position="121"/>
    </location>
</feature>
<feature type="strand" evidence="8">
    <location>
        <begin position="127"/>
        <end position="131"/>
    </location>
</feature>
<feature type="helix" evidence="8">
    <location>
        <begin position="150"/>
        <end position="156"/>
    </location>
</feature>
<feature type="strand" evidence="8">
    <location>
        <begin position="168"/>
        <end position="171"/>
    </location>
</feature>
<feature type="helix" evidence="8">
    <location>
        <begin position="174"/>
        <end position="190"/>
    </location>
</feature>
<feature type="helix" evidence="8">
    <location>
        <begin position="194"/>
        <end position="202"/>
    </location>
</feature>
<feature type="helix" evidence="8">
    <location>
        <begin position="210"/>
        <end position="225"/>
    </location>
</feature>
<feature type="helix" evidence="8">
    <location>
        <begin position="231"/>
        <end position="233"/>
    </location>
</feature>
<feature type="helix" evidence="8">
    <location>
        <begin position="240"/>
        <end position="257"/>
    </location>
</feature>
<feature type="helix" evidence="8">
    <location>
        <begin position="261"/>
        <end position="283"/>
    </location>
</feature>
<feature type="helix" evidence="8">
    <location>
        <begin position="287"/>
        <end position="291"/>
    </location>
</feature>
<feature type="helix" evidence="8">
    <location>
        <begin position="302"/>
        <end position="311"/>
    </location>
</feature>
<feature type="helix" evidence="8">
    <location>
        <begin position="315"/>
        <end position="320"/>
    </location>
</feature>
<feature type="helix" evidence="8">
    <location>
        <begin position="322"/>
        <end position="326"/>
    </location>
</feature>
<feature type="helix" evidence="8">
    <location>
        <begin position="328"/>
        <end position="336"/>
    </location>
</feature>
<feature type="helix" evidence="8">
    <location>
        <begin position="343"/>
        <end position="364"/>
    </location>
</feature>
<feature type="helix" evidence="8">
    <location>
        <begin position="368"/>
        <end position="371"/>
    </location>
</feature>
<feature type="helix" evidence="8">
    <location>
        <begin position="373"/>
        <end position="383"/>
    </location>
</feature>
<sequence>MRVLISAVGDTDPFRNFHDGSLIHIARKYRPEKVILIFSEHTAKKQGNIEKALFSIAPNYEPELIIHDPIISDNEVHIFDVMFQRFSDILQEYYTKEDEFILNLSSATPQIKSALFVINRLNGINVKAVQVSSPEHASNENIGHDNDENIDELIEVNKDNKVNFIDRTIEDNAEKFSQALLKKTARDFIEKFDYKAALDILDQLSDFPNLKSVREEIRDVVNCLSKQDVPKGLRHKKLKEEEQKILSAYLTIELQRERGNVSESFIRIKNLTEFILEDYIEKRYPGLIDEYCEDIQKYYLSLFDYSKLLKATKEFKLKRTIAPIIDMNSSRNKVAHSLSPLDSDAVKQLGIAMKTLKTLVREQYHFSQSDFNFYHDLNKILLTKLN</sequence>
<organism>
    <name type="scientific">Streptococcus thermophilus</name>
    <dbReference type="NCBI Taxonomy" id="1308"/>
    <lineage>
        <taxon>Bacteria</taxon>
        <taxon>Bacillati</taxon>
        <taxon>Bacillota</taxon>
        <taxon>Bacilli</taxon>
        <taxon>Lactobacillales</taxon>
        <taxon>Streptococcaceae</taxon>
        <taxon>Streptococcus</taxon>
    </lineage>
</organism>
<name>CSM6B_STRTR</name>
<comment type="function">
    <text evidence="2">CRISPR (clustered regularly interspaced short palindromic repeat) is an adaptive immune system that provides protection against mobile genetic elements (viruses, transposable elements and conjugative plasmids). CRISPR clusters contain spacers, sequences complementary to antecedent mobile elements, and target invading nucleic acids. CRISPR clusters are transcribed and processed into CRISPR RNA (crRNA). The type III-A Csm complex binds crRNA and acts as a crRNA-guided RNase, DNase and cyclic oligoadenylate synthase; binding of target RNA cognate to the crRNA is required for all activities. In a heterologous host this Csm effector complex restricts ssRNA phage MS2, suggesting it may target RNA viruses in vivo. This protein is not part of the Csm complex.</text>
</comment>
<comment type="function">
    <text evidence="3">Csm functions as a non-specific ssDNase. Base-pairing between crRNA and target RNA to form a ternary Csm complex activates a ssDNase activity; target RNA cleavage suppresses the ssDNase, a temporal control that prevents uncontrolled DNA degradation. Viral RNA transcripts probably tether the Csm complex to the viral genome, recruiting Cas10 ssDNA activity which is able to degrade DNA in the transcription bubble, spatially controlling the DNase activity.</text>
</comment>
<comment type="function">
    <text evidence="4">A single-strand-specific endoribonuclease (ssRNase) that is approximately 1000-fold stimulated by cyclic oligoadenylate (cOA); although several species of cOA are synthesized by this organism only cyclic hexaadenylate (cA6) stimulates the ssRNase activity. Cleaves preferentially within GA or AA dinucleotides, although the presence of cA6 broadens the preference.</text>
</comment>
<comment type="activity regulation">
    <text evidence="4">Non-specific ssRNase activity is stimulated about 1000-fold by cyclic oligoadenylate (cOA), a second messenger produced by Cas10 of the ternary Csm effector complex in the presence of a cognate target RNA.</text>
</comment>
<comment type="subunit">
    <text evidence="1 4">Homodimer (PubMed:28663439). The composite ssRNase active site is formed at the dimer interface (By similarity).</text>
</comment>
<comment type="domain">
    <text evidence="1">The N-terminal CRISPR-associated Rossman fold (CARF) probably binds the cA6 effector. ssRNase activity resides in the C-terminal HEPN domain.</text>
</comment>
<comment type="miscellaneous">
    <text evidence="2">Encoded in a type III-A CRISPR locus.</text>
</comment>
<comment type="similarity">
    <text evidence="7">Belongs to the CRISPR-associated Csm6 family.</text>
</comment>
<gene>
    <name evidence="5" type="primary">csm6'</name>
</gene>
<proteinExistence type="evidence at protein level"/>
<keyword id="KW-0002">3D-structure</keyword>
<keyword id="KW-0051">Antiviral defense</keyword>
<keyword id="KW-0255">Endonuclease</keyword>
<keyword id="KW-0378">Hydrolase</keyword>
<keyword id="KW-0540">Nuclease</keyword>
<keyword id="KW-0547">Nucleotide-binding</keyword>
<keyword id="KW-0694">RNA-binding</keyword>